<dbReference type="GO" id="GO:0005576">
    <property type="term" value="C:extracellular region"/>
    <property type="evidence" value="ECO:0007669"/>
    <property type="project" value="UniProtKB-SubCell"/>
</dbReference>
<dbReference type="GO" id="GO:0005184">
    <property type="term" value="F:neuropeptide hormone activity"/>
    <property type="evidence" value="ECO:0007669"/>
    <property type="project" value="InterPro"/>
</dbReference>
<dbReference type="GO" id="GO:0007218">
    <property type="term" value="P:neuropeptide signaling pathway"/>
    <property type="evidence" value="ECO:0007669"/>
    <property type="project" value="UniProtKB-KW"/>
</dbReference>
<dbReference type="InterPro" id="IPR001484">
    <property type="entry name" value="Pyrokinin_CS"/>
</dbReference>
<dbReference type="PROSITE" id="PS00539">
    <property type="entry name" value="PYROKININ"/>
    <property type="match status" value="1"/>
</dbReference>
<proteinExistence type="evidence at protein level"/>
<name>PPK5_NEORO</name>
<reference evidence="5" key="1">
    <citation type="journal article" date="2009" name="BMC Evol. Biol.">
        <title>A proteomic approach for studying insect phylogeny: CAPA peptides of ancient insect taxa (Dictyoptera, Blattoptera) as a test case.</title>
        <authorList>
            <person name="Roth S."/>
            <person name="Fromm B."/>
            <person name="Gaede G."/>
            <person name="Predel R."/>
        </authorList>
    </citation>
    <scope>PROTEIN SEQUENCE</scope>
    <scope>AMIDATION AT LEU-17</scope>
    <source>
        <tissue evidence="3">Abdominal perisympathetic organs</tissue>
    </source>
</reference>
<keyword id="KW-0027">Amidation</keyword>
<keyword id="KW-0903">Direct protein sequencing</keyword>
<keyword id="KW-0527">Neuropeptide</keyword>
<keyword id="KW-0964">Secreted</keyword>
<protein>
    <recommendedName>
        <fullName evidence="1">Pyrokinin-5</fullName>
    </recommendedName>
    <alternativeName>
        <fullName evidence="1">FXPRL-amide</fullName>
    </alternativeName>
    <alternativeName>
        <fullName evidence="4">NeoRh-Capa-PK</fullName>
    </alternativeName>
</protein>
<accession>P85685</accession>
<feature type="peptide" id="PRO_0000378706" description="Pyrokinin-5" evidence="3">
    <location>
        <begin position="1"/>
        <end position="17"/>
    </location>
</feature>
<feature type="modified residue" description="Leucine amide" evidence="3">
    <location>
        <position position="17"/>
    </location>
</feature>
<organism>
    <name type="scientific">Neostylopyga rhombifolia</name>
    <name type="common">Harlequin cockroach</name>
    <dbReference type="NCBI Taxonomy" id="304879"/>
    <lineage>
        <taxon>Eukaryota</taxon>
        <taxon>Metazoa</taxon>
        <taxon>Ecdysozoa</taxon>
        <taxon>Arthropoda</taxon>
        <taxon>Hexapoda</taxon>
        <taxon>Insecta</taxon>
        <taxon>Pterygota</taxon>
        <taxon>Neoptera</taxon>
        <taxon>Polyneoptera</taxon>
        <taxon>Dictyoptera</taxon>
        <taxon>Blattodea</taxon>
        <taxon>Blattoidea</taxon>
        <taxon>Blattidae</taxon>
        <taxon>Blattinae</taxon>
        <taxon>Neostylopyga</taxon>
    </lineage>
</organism>
<evidence type="ECO:0000250" key="1">
    <source>
        <dbReference type="UniProtKB" id="P82617"/>
    </source>
</evidence>
<evidence type="ECO:0000255" key="2"/>
<evidence type="ECO:0000269" key="3">
    <source>
    </source>
</evidence>
<evidence type="ECO:0000303" key="4">
    <source>
    </source>
</evidence>
<evidence type="ECO:0000305" key="5"/>
<sequence>GGGGSGETSGMWFGPRL</sequence>
<comment type="function">
    <text evidence="1">Myoactive.</text>
</comment>
<comment type="subcellular location">
    <subcellularLocation>
        <location evidence="5">Secreted</location>
    </subcellularLocation>
</comment>
<comment type="similarity">
    <text evidence="2">Belongs to the pyrokinin family.</text>
</comment>